<reference key="1">
    <citation type="journal article" date="2005" name="Science">
        <title>Genome sequence of the PCE-dechlorinating bacterium Dehalococcoides ethenogenes.</title>
        <authorList>
            <person name="Seshadri R."/>
            <person name="Adrian L."/>
            <person name="Fouts D.E."/>
            <person name="Eisen J.A."/>
            <person name="Phillippy A.M."/>
            <person name="Methe B.A."/>
            <person name="Ward N.L."/>
            <person name="Nelson W.C."/>
            <person name="DeBoy R.T."/>
            <person name="Khouri H.M."/>
            <person name="Kolonay J.F."/>
            <person name="Dodson R.J."/>
            <person name="Daugherty S.C."/>
            <person name="Brinkac L.M."/>
            <person name="Sullivan S.A."/>
            <person name="Madupu R."/>
            <person name="Nelson K.E."/>
            <person name="Kang K.H."/>
            <person name="Impraim M."/>
            <person name="Tran K."/>
            <person name="Robinson J.M."/>
            <person name="Forberger H.A."/>
            <person name="Fraser C.M."/>
            <person name="Zinder S.H."/>
            <person name="Heidelberg J.F."/>
        </authorList>
    </citation>
    <scope>NUCLEOTIDE SEQUENCE [LARGE SCALE GENOMIC DNA]</scope>
    <source>
        <strain>ATCC BAA-2266 / KCTC 15142 / 195</strain>
    </source>
</reference>
<sequence>MQKLHREICGPVGLVPTMGYLHEGHLSLIRASKKQDLNTVASIFVNPTQFGPHEDFKKYPRDEKRDMAMLENAGVDYVFAPSVEEMYPPGFDSWVEPGVLQERLEGAVRPGHFRGVCTVVAKLFTIICPAKAYFGQKDYQQYLIIKKMASDLNLDVSVEMLPIVRESDGLALSSRNTYLSASERKAALVLYRSLLTAKSLFAAKEYNPEIIRRKMTEEIQRESLAEIDYVSLSDQDTLGEADKVSIKTIALVAARFGKTRLIDNMFLA</sequence>
<dbReference type="EC" id="6.3.2.1" evidence="1"/>
<dbReference type="EMBL" id="CP000027">
    <property type="protein sequence ID" value="AAW39875.1"/>
    <property type="molecule type" value="Genomic_DNA"/>
</dbReference>
<dbReference type="SMR" id="Q3Z8B3"/>
<dbReference type="FunCoup" id="Q3Z8B3">
    <property type="interactions" value="330"/>
</dbReference>
<dbReference type="STRING" id="243164.DET0804"/>
<dbReference type="KEGG" id="det:DET0804"/>
<dbReference type="eggNOG" id="COG0414">
    <property type="taxonomic scope" value="Bacteria"/>
</dbReference>
<dbReference type="HOGENOM" id="CLU_047148_0_0_0"/>
<dbReference type="InParanoid" id="Q3Z8B3"/>
<dbReference type="UniPathway" id="UPA00028">
    <property type="reaction ID" value="UER00005"/>
</dbReference>
<dbReference type="Proteomes" id="UP000008289">
    <property type="component" value="Chromosome"/>
</dbReference>
<dbReference type="GO" id="GO:0005829">
    <property type="term" value="C:cytosol"/>
    <property type="evidence" value="ECO:0007669"/>
    <property type="project" value="TreeGrafter"/>
</dbReference>
<dbReference type="GO" id="GO:0005524">
    <property type="term" value="F:ATP binding"/>
    <property type="evidence" value="ECO:0007669"/>
    <property type="project" value="UniProtKB-KW"/>
</dbReference>
<dbReference type="GO" id="GO:0004592">
    <property type="term" value="F:pantoate-beta-alanine ligase activity"/>
    <property type="evidence" value="ECO:0007669"/>
    <property type="project" value="UniProtKB-UniRule"/>
</dbReference>
<dbReference type="GO" id="GO:0015940">
    <property type="term" value="P:pantothenate biosynthetic process"/>
    <property type="evidence" value="ECO:0007669"/>
    <property type="project" value="UniProtKB-UniRule"/>
</dbReference>
<dbReference type="CDD" id="cd00560">
    <property type="entry name" value="PanC"/>
    <property type="match status" value="1"/>
</dbReference>
<dbReference type="FunFam" id="3.30.1300.10:FF:000001">
    <property type="entry name" value="Pantothenate synthetase"/>
    <property type="match status" value="1"/>
</dbReference>
<dbReference type="Gene3D" id="3.40.50.620">
    <property type="entry name" value="HUPs"/>
    <property type="match status" value="1"/>
</dbReference>
<dbReference type="Gene3D" id="3.30.1300.10">
    <property type="entry name" value="Pantoate-beta-alanine ligase, C-terminal domain"/>
    <property type="match status" value="1"/>
</dbReference>
<dbReference type="HAMAP" id="MF_00158">
    <property type="entry name" value="PanC"/>
    <property type="match status" value="1"/>
</dbReference>
<dbReference type="InterPro" id="IPR003721">
    <property type="entry name" value="Pantoate_ligase"/>
</dbReference>
<dbReference type="InterPro" id="IPR042176">
    <property type="entry name" value="Pantoate_ligase_C"/>
</dbReference>
<dbReference type="InterPro" id="IPR014729">
    <property type="entry name" value="Rossmann-like_a/b/a_fold"/>
</dbReference>
<dbReference type="NCBIfam" id="TIGR00018">
    <property type="entry name" value="panC"/>
    <property type="match status" value="1"/>
</dbReference>
<dbReference type="PANTHER" id="PTHR21299">
    <property type="entry name" value="CYTIDYLATE KINASE/PANTOATE-BETA-ALANINE LIGASE"/>
    <property type="match status" value="1"/>
</dbReference>
<dbReference type="PANTHER" id="PTHR21299:SF1">
    <property type="entry name" value="PANTOATE--BETA-ALANINE LIGASE"/>
    <property type="match status" value="1"/>
</dbReference>
<dbReference type="Pfam" id="PF02569">
    <property type="entry name" value="Pantoate_ligase"/>
    <property type="match status" value="1"/>
</dbReference>
<dbReference type="SUPFAM" id="SSF52374">
    <property type="entry name" value="Nucleotidylyl transferase"/>
    <property type="match status" value="1"/>
</dbReference>
<organism>
    <name type="scientific">Dehalococcoides mccartyi (strain ATCC BAA-2266 / KCTC 15142 / 195)</name>
    <name type="common">Dehalococcoides ethenogenes (strain 195)</name>
    <dbReference type="NCBI Taxonomy" id="243164"/>
    <lineage>
        <taxon>Bacteria</taxon>
        <taxon>Bacillati</taxon>
        <taxon>Chloroflexota</taxon>
        <taxon>Dehalococcoidia</taxon>
        <taxon>Dehalococcoidales</taxon>
        <taxon>Dehalococcoidaceae</taxon>
        <taxon>Dehalococcoides</taxon>
    </lineage>
</organism>
<evidence type="ECO:0000255" key="1">
    <source>
        <dbReference type="HAMAP-Rule" id="MF_00158"/>
    </source>
</evidence>
<proteinExistence type="inferred from homology"/>
<protein>
    <recommendedName>
        <fullName evidence="1">Pantothenate synthetase</fullName>
        <shortName evidence="1">PS</shortName>
        <ecNumber evidence="1">6.3.2.1</ecNumber>
    </recommendedName>
    <alternativeName>
        <fullName evidence="1">Pantoate--beta-alanine ligase</fullName>
    </alternativeName>
    <alternativeName>
        <fullName evidence="1">Pantoate-activating enzyme</fullName>
    </alternativeName>
</protein>
<keyword id="KW-0067">ATP-binding</keyword>
<keyword id="KW-0963">Cytoplasm</keyword>
<keyword id="KW-0436">Ligase</keyword>
<keyword id="KW-0547">Nucleotide-binding</keyword>
<keyword id="KW-0566">Pantothenate biosynthesis</keyword>
<comment type="function">
    <text evidence="1">Catalyzes the condensation of pantoate with beta-alanine in an ATP-dependent reaction via a pantoyl-adenylate intermediate.</text>
</comment>
<comment type="catalytic activity">
    <reaction evidence="1">
        <text>(R)-pantoate + beta-alanine + ATP = (R)-pantothenate + AMP + diphosphate + H(+)</text>
        <dbReference type="Rhea" id="RHEA:10912"/>
        <dbReference type="ChEBI" id="CHEBI:15378"/>
        <dbReference type="ChEBI" id="CHEBI:15980"/>
        <dbReference type="ChEBI" id="CHEBI:29032"/>
        <dbReference type="ChEBI" id="CHEBI:30616"/>
        <dbReference type="ChEBI" id="CHEBI:33019"/>
        <dbReference type="ChEBI" id="CHEBI:57966"/>
        <dbReference type="ChEBI" id="CHEBI:456215"/>
        <dbReference type="EC" id="6.3.2.1"/>
    </reaction>
</comment>
<comment type="pathway">
    <text evidence="1">Cofactor biosynthesis; (R)-pantothenate biosynthesis; (R)-pantothenate from (R)-pantoate and beta-alanine: step 1/1.</text>
</comment>
<comment type="subunit">
    <text evidence="1">Homodimer.</text>
</comment>
<comment type="subcellular location">
    <subcellularLocation>
        <location evidence="1">Cytoplasm</location>
    </subcellularLocation>
</comment>
<comment type="miscellaneous">
    <text evidence="1">The reaction proceeds by a bi uni uni bi ping pong mechanism.</text>
</comment>
<comment type="similarity">
    <text evidence="1">Belongs to the pantothenate synthetase family.</text>
</comment>
<accession>Q3Z8B3</accession>
<gene>
    <name evidence="1" type="primary">panC</name>
    <name type="ordered locus">DET0804</name>
</gene>
<name>PANC_DEHM1</name>
<feature type="chain" id="PRO_0000305435" description="Pantothenate synthetase">
    <location>
        <begin position="1"/>
        <end position="268"/>
    </location>
</feature>
<feature type="active site" description="Proton donor" evidence="1">
    <location>
        <position position="25"/>
    </location>
</feature>
<feature type="binding site" evidence="1">
    <location>
        <begin position="18"/>
        <end position="25"/>
    </location>
    <ligand>
        <name>ATP</name>
        <dbReference type="ChEBI" id="CHEBI:30616"/>
    </ligand>
</feature>
<feature type="binding site" evidence="1">
    <location>
        <position position="49"/>
    </location>
    <ligand>
        <name>(R)-pantoate</name>
        <dbReference type="ChEBI" id="CHEBI:15980"/>
    </ligand>
</feature>
<feature type="binding site" evidence="1">
    <location>
        <position position="49"/>
    </location>
    <ligand>
        <name>beta-alanine</name>
        <dbReference type="ChEBI" id="CHEBI:57966"/>
    </ligand>
</feature>
<feature type="binding site" evidence="1">
    <location>
        <begin position="135"/>
        <end position="138"/>
    </location>
    <ligand>
        <name>ATP</name>
        <dbReference type="ChEBI" id="CHEBI:30616"/>
    </ligand>
</feature>
<feature type="binding site" evidence="1">
    <location>
        <position position="141"/>
    </location>
    <ligand>
        <name>(R)-pantoate</name>
        <dbReference type="ChEBI" id="CHEBI:15980"/>
    </ligand>
</feature>
<feature type="binding site" evidence="1">
    <location>
        <position position="164"/>
    </location>
    <ligand>
        <name>ATP</name>
        <dbReference type="ChEBI" id="CHEBI:30616"/>
    </ligand>
</feature>
<feature type="binding site" evidence="1">
    <location>
        <begin position="172"/>
        <end position="175"/>
    </location>
    <ligand>
        <name>ATP</name>
        <dbReference type="ChEBI" id="CHEBI:30616"/>
    </ligand>
</feature>